<feature type="chain" id="PRO_0000231884" description="Homoserine O-succinyltransferase">
    <location>
        <begin position="1"/>
        <end position="445"/>
    </location>
</feature>
<feature type="domain" description="AB hydrolase-1" evidence="1">
    <location>
        <begin position="45"/>
        <end position="411"/>
    </location>
</feature>
<feature type="active site" description="Nucleophile" evidence="1">
    <location>
        <position position="153"/>
    </location>
</feature>
<feature type="active site" evidence="1">
    <location>
        <position position="373"/>
    </location>
</feature>
<feature type="active site" evidence="1">
    <location>
        <position position="406"/>
    </location>
</feature>
<feature type="binding site" evidence="1">
    <location>
        <position position="223"/>
    </location>
    <ligand>
        <name>substrate</name>
    </ligand>
</feature>
<feature type="binding site" evidence="1">
    <location>
        <position position="407"/>
    </location>
    <ligand>
        <name>substrate</name>
    </ligand>
</feature>
<feature type="site" description="Important for acyl-CoA specificity" evidence="1">
    <location>
        <position position="375"/>
    </location>
</feature>
<dbReference type="EC" id="2.3.1.46" evidence="1"/>
<dbReference type="EMBL" id="CP000082">
    <property type="protein sequence ID" value="AAZ18244.1"/>
    <property type="molecule type" value="Genomic_DNA"/>
</dbReference>
<dbReference type="RefSeq" id="WP_011279682.1">
    <property type="nucleotide sequence ID" value="NC_007204.1"/>
</dbReference>
<dbReference type="SMR" id="Q4FUR4"/>
<dbReference type="STRING" id="259536.Psyc_0375"/>
<dbReference type="ESTHER" id="psyar-metx">
    <property type="family name" value="Homoserine_transacetylase"/>
</dbReference>
<dbReference type="KEGG" id="par:Psyc_0375"/>
<dbReference type="eggNOG" id="COG2021">
    <property type="taxonomic scope" value="Bacteria"/>
</dbReference>
<dbReference type="HOGENOM" id="CLU_028760_7_0_6"/>
<dbReference type="OrthoDB" id="9800754at2"/>
<dbReference type="UniPathway" id="UPA00051">
    <property type="reaction ID" value="UER00075"/>
</dbReference>
<dbReference type="Proteomes" id="UP000000546">
    <property type="component" value="Chromosome"/>
</dbReference>
<dbReference type="GO" id="GO:0005737">
    <property type="term" value="C:cytoplasm"/>
    <property type="evidence" value="ECO:0007669"/>
    <property type="project" value="UniProtKB-SubCell"/>
</dbReference>
<dbReference type="GO" id="GO:0004414">
    <property type="term" value="F:homoserine O-acetyltransferase activity"/>
    <property type="evidence" value="ECO:0007669"/>
    <property type="project" value="TreeGrafter"/>
</dbReference>
<dbReference type="GO" id="GO:0008899">
    <property type="term" value="F:homoserine O-succinyltransferase activity"/>
    <property type="evidence" value="ECO:0007669"/>
    <property type="project" value="UniProtKB-UniRule"/>
</dbReference>
<dbReference type="GO" id="GO:0009092">
    <property type="term" value="P:homoserine metabolic process"/>
    <property type="evidence" value="ECO:0007669"/>
    <property type="project" value="TreeGrafter"/>
</dbReference>
<dbReference type="GO" id="GO:0009086">
    <property type="term" value="P:methionine biosynthetic process"/>
    <property type="evidence" value="ECO:0007669"/>
    <property type="project" value="UniProtKB-UniRule"/>
</dbReference>
<dbReference type="FunFam" id="1.10.1740.110:FF:000001">
    <property type="entry name" value="Homoserine O-acetyltransferase"/>
    <property type="match status" value="1"/>
</dbReference>
<dbReference type="Gene3D" id="1.10.1740.110">
    <property type="match status" value="1"/>
</dbReference>
<dbReference type="Gene3D" id="3.40.50.1820">
    <property type="entry name" value="alpha/beta hydrolase"/>
    <property type="match status" value="2"/>
</dbReference>
<dbReference type="HAMAP" id="MF_00296">
    <property type="entry name" value="MetX_acyltransf"/>
    <property type="match status" value="1"/>
</dbReference>
<dbReference type="InterPro" id="IPR000073">
    <property type="entry name" value="AB_hydrolase_1"/>
</dbReference>
<dbReference type="InterPro" id="IPR029058">
    <property type="entry name" value="AB_hydrolase_fold"/>
</dbReference>
<dbReference type="InterPro" id="IPR008220">
    <property type="entry name" value="HAT_MetX-like"/>
</dbReference>
<dbReference type="NCBIfam" id="TIGR01392">
    <property type="entry name" value="homoserO_Ac_trn"/>
    <property type="match status" value="1"/>
</dbReference>
<dbReference type="NCBIfam" id="NF001209">
    <property type="entry name" value="PRK00175.1"/>
    <property type="match status" value="1"/>
</dbReference>
<dbReference type="PANTHER" id="PTHR32268">
    <property type="entry name" value="HOMOSERINE O-ACETYLTRANSFERASE"/>
    <property type="match status" value="1"/>
</dbReference>
<dbReference type="PANTHER" id="PTHR32268:SF11">
    <property type="entry name" value="HOMOSERINE O-ACETYLTRANSFERASE"/>
    <property type="match status" value="1"/>
</dbReference>
<dbReference type="Pfam" id="PF00561">
    <property type="entry name" value="Abhydrolase_1"/>
    <property type="match status" value="1"/>
</dbReference>
<dbReference type="PIRSF" id="PIRSF000443">
    <property type="entry name" value="Homoser_Ac_trans"/>
    <property type="match status" value="1"/>
</dbReference>
<dbReference type="SUPFAM" id="SSF53474">
    <property type="entry name" value="alpha/beta-Hydrolases"/>
    <property type="match status" value="1"/>
</dbReference>
<organism>
    <name type="scientific">Psychrobacter arcticus (strain DSM 17307 / VKM B-2377 / 273-4)</name>
    <dbReference type="NCBI Taxonomy" id="259536"/>
    <lineage>
        <taxon>Bacteria</taxon>
        <taxon>Pseudomonadati</taxon>
        <taxon>Pseudomonadota</taxon>
        <taxon>Gammaproteobacteria</taxon>
        <taxon>Moraxellales</taxon>
        <taxon>Moraxellaceae</taxon>
        <taxon>Psychrobacter</taxon>
    </lineage>
</organism>
<keyword id="KW-0012">Acyltransferase</keyword>
<keyword id="KW-0028">Amino-acid biosynthesis</keyword>
<keyword id="KW-0963">Cytoplasm</keyword>
<keyword id="KW-0486">Methionine biosynthesis</keyword>
<keyword id="KW-1185">Reference proteome</keyword>
<keyword id="KW-0808">Transferase</keyword>
<sequence>MNSVGVVKPQTLHFAEPLTLECNRTLPSFELIIETYGTLNSDKSNAVLICHALSGSHHAAGFHSDNDKKAGWWDNMIGPNKSIDTNRFFVVCVNNIGSCFGSTGPTSINPESSKAQVYGPDFPLVTIKDWVKTQAMLSDRLEIDVWHAVVGGSMGGMQALQWAADYPSRLKRCVVIASTPKLSAQNIAFNEVARQSILSDPDFKNGRYLQAGTYPRRGLILARMVGHITYLTDDAMKAKFGRDLKSGKFMYGYDVEFQVESYLRYQGERFSENFDANTYLLMTKALDYFDPTRDYPLTQSAQPIDSLVPEELLASSLVESVKADSSEDELAKTLADSADIDNISASNHQELTALKAAFAHTECQYLIVSFTTDWRFAPERSQEIVDALMATGKPVSYINVDAPHGHDSFLFDIPRYMGAVKGFLNAPFMTDNQSKNSQQKLGARS</sequence>
<name>METXS_PSYA2</name>
<protein>
    <recommendedName>
        <fullName evidence="1">Homoserine O-succinyltransferase</fullName>
        <shortName evidence="1">HST</shortName>
        <ecNumber evidence="1">2.3.1.46</ecNumber>
    </recommendedName>
    <alternativeName>
        <fullName evidence="1">Homoserine transsuccinylase</fullName>
        <shortName evidence="1">HTS</shortName>
    </alternativeName>
</protein>
<comment type="function">
    <text evidence="1">Transfers a succinyl group from succinyl-CoA to L-homoserine, forming succinyl-L-homoserine.</text>
</comment>
<comment type="catalytic activity">
    <reaction evidence="1">
        <text>L-homoserine + succinyl-CoA = O-succinyl-L-homoserine + CoA</text>
        <dbReference type="Rhea" id="RHEA:22008"/>
        <dbReference type="ChEBI" id="CHEBI:57287"/>
        <dbReference type="ChEBI" id="CHEBI:57292"/>
        <dbReference type="ChEBI" id="CHEBI:57476"/>
        <dbReference type="ChEBI" id="CHEBI:57661"/>
        <dbReference type="EC" id="2.3.1.46"/>
    </reaction>
</comment>
<comment type="pathway">
    <text evidence="1">Amino-acid biosynthesis; L-methionine biosynthesis via de novo pathway; O-succinyl-L-homoserine from L-homoserine: step 1/1.</text>
</comment>
<comment type="subunit">
    <text evidence="1">Homodimer.</text>
</comment>
<comment type="subcellular location">
    <subcellularLocation>
        <location evidence="1">Cytoplasm</location>
    </subcellularLocation>
</comment>
<comment type="similarity">
    <text evidence="1">Belongs to the AB hydrolase superfamily. MetX family.</text>
</comment>
<accession>Q4FUR4</accession>
<evidence type="ECO:0000255" key="1">
    <source>
        <dbReference type="HAMAP-Rule" id="MF_00296"/>
    </source>
</evidence>
<proteinExistence type="inferred from homology"/>
<reference key="1">
    <citation type="journal article" date="2010" name="Appl. Environ. Microbiol.">
        <title>The genome sequence of Psychrobacter arcticus 273-4, a psychroactive Siberian permafrost bacterium, reveals mechanisms for adaptation to low-temperature growth.</title>
        <authorList>
            <person name="Ayala-del-Rio H.L."/>
            <person name="Chain P.S."/>
            <person name="Grzymski J.J."/>
            <person name="Ponder M.A."/>
            <person name="Ivanova N."/>
            <person name="Bergholz P.W."/>
            <person name="Di Bartolo G."/>
            <person name="Hauser L."/>
            <person name="Land M."/>
            <person name="Bakermans C."/>
            <person name="Rodrigues D."/>
            <person name="Klappenbach J."/>
            <person name="Zarka D."/>
            <person name="Larimer F."/>
            <person name="Richardson P."/>
            <person name="Murray A."/>
            <person name="Thomashow M."/>
            <person name="Tiedje J.M."/>
        </authorList>
    </citation>
    <scope>NUCLEOTIDE SEQUENCE [LARGE SCALE GENOMIC DNA]</scope>
    <source>
        <strain>DSM 17307 / VKM B-2377 / 273-4</strain>
    </source>
</reference>
<gene>
    <name evidence="1" type="primary">metXS</name>
    <name type="ordered locus">Psyc_0375</name>
</gene>